<sequence length="925" mass="102132">MIKVFKDLKFLILITIILLNLKSINCKIIYGDSVSFERVLSPQLGKNITLPWGKDKVIHLCNPHGEESIPVLVSNNIPLGKLASNDENFLAIFGNQSFARLLAHFNCKKTEETCIRLRTDLPVFTSCLLIGSVDGFDHVTFNSSLSGVPTNMNSWNVDTVGKFSNNLTSAGRIIVKNDNNQISLGCFEEGDKNNLNYILMHPNNPIDTIDICYKSFNEESEYVLYGLVECGDTSKSSFSISGYVFFDKYYSSSRINNPPVAGQIVYIQQKNGVVYDLDGKRVNQTITDARGFYYFNNIPGGDYQVYITPSDPDTLYSPDVDSNLQDPYTNKATNGSIETYIYINGSGVVPVSKTNFDDIKLTSVYVIREMNIGILPKNISMEGLVFIDYNANGQMDTAVTNTSAQDKPYSGVRVQLLDENRVVRDVITGDDGIFSFPDVPYVSTGYIAVIYTPSGNVMTNYPFPPSPLAGEIINLEIVPNNILLVGLINNENYCQDSPLMAIICYANQGYNESHADDPVLITFPSNANKHLYNMPHGTVQHIATHKEIGSVYGVGVDRVNGDIYTSAFMKYYSGFGPSGTGAIYKSTTKNNDYQTSLYFDLNKAMNQEDYCGTDSHIYPMDNYDGGVEKVGKIAFGDLDIHNGSLYTIALATKELLRVSISDPRDFQLYNIYNPCIEEPDDWRPFALGLRHGNIIIGGVCSKESDSTNIPVGYIMEMSGNILLTVPMDFPRGCKSFGGSFCIPGEYSAWSSVYFESQPWISDLTMDGEDMIISIRDRGGDLDRDVGTYDMLRACFDGDQLILENSGICGGVPGAHLLPSGYFGTPDGINSGEYYNDNFYYPTDNDGHDNVASTSGVVIPGYHTLFGSSLDIDSVGQGTVKVWDNKNGLLLYGIGVYLQSNENPTNNFGKANGLGDMEPICYNYIK</sequence>
<protein>
    <recommendedName>
        <fullName>Colossin-D</fullName>
    </recommendedName>
</protein>
<feature type="signal peptide" evidence="1">
    <location>
        <begin position="1"/>
        <end position="26"/>
    </location>
</feature>
<feature type="chain" id="PRO_0000388252" description="Colossin-D">
    <location>
        <begin position="27"/>
        <end position="925"/>
    </location>
</feature>
<feature type="glycosylation site" description="N-linked (GlcNAc...) asparagine" evidence="1">
    <location>
        <position position="47"/>
    </location>
</feature>
<feature type="glycosylation site" description="N-linked (GlcNAc...) asparagine" evidence="1">
    <location>
        <position position="95"/>
    </location>
</feature>
<feature type="glycosylation site" description="N-linked (GlcNAc...) asparagine" evidence="1">
    <location>
        <position position="142"/>
    </location>
</feature>
<feature type="glycosylation site" description="N-linked (GlcNAc...) asparagine" evidence="1">
    <location>
        <position position="166"/>
    </location>
</feature>
<feature type="glycosylation site" description="N-linked (GlcNAc...) asparagine" evidence="1">
    <location>
        <position position="283"/>
    </location>
</feature>
<feature type="glycosylation site" description="N-linked (GlcNAc...) asparagine" evidence="1">
    <location>
        <position position="334"/>
    </location>
</feature>
<feature type="glycosylation site" description="N-linked (GlcNAc...) asparagine" evidence="1">
    <location>
        <position position="344"/>
    </location>
</feature>
<feature type="glycosylation site" description="N-linked (GlcNAc...) asparagine" evidence="1">
    <location>
        <position position="378"/>
    </location>
</feature>
<feature type="glycosylation site" description="N-linked (GlcNAc...) asparagine" evidence="1">
    <location>
        <position position="401"/>
    </location>
</feature>
<feature type="glycosylation site" description="N-linked (GlcNAc...) asparagine" evidence="1">
    <location>
        <position position="511"/>
    </location>
</feature>
<feature type="glycosylation site" description="N-linked (GlcNAc...) asparagine" evidence="1">
    <location>
        <position position="642"/>
    </location>
</feature>
<accession>Q54NU3</accession>
<reference key="1">
    <citation type="journal article" date="2005" name="Nature">
        <title>The genome of the social amoeba Dictyostelium discoideum.</title>
        <authorList>
            <person name="Eichinger L."/>
            <person name="Pachebat J.A."/>
            <person name="Gloeckner G."/>
            <person name="Rajandream M.A."/>
            <person name="Sucgang R."/>
            <person name="Berriman M."/>
            <person name="Song J."/>
            <person name="Olsen R."/>
            <person name="Szafranski K."/>
            <person name="Xu Q."/>
            <person name="Tunggal B."/>
            <person name="Kummerfeld S."/>
            <person name="Madera M."/>
            <person name="Konfortov B.A."/>
            <person name="Rivero F."/>
            <person name="Bankier A.T."/>
            <person name="Lehmann R."/>
            <person name="Hamlin N."/>
            <person name="Davies R."/>
            <person name="Gaudet P."/>
            <person name="Fey P."/>
            <person name="Pilcher K."/>
            <person name="Chen G."/>
            <person name="Saunders D."/>
            <person name="Sodergren E.J."/>
            <person name="Davis P."/>
            <person name="Kerhornou A."/>
            <person name="Nie X."/>
            <person name="Hall N."/>
            <person name="Anjard C."/>
            <person name="Hemphill L."/>
            <person name="Bason N."/>
            <person name="Farbrother P."/>
            <person name="Desany B."/>
            <person name="Just E."/>
            <person name="Morio T."/>
            <person name="Rost R."/>
            <person name="Churcher C.M."/>
            <person name="Cooper J."/>
            <person name="Haydock S."/>
            <person name="van Driessche N."/>
            <person name="Cronin A."/>
            <person name="Goodhead I."/>
            <person name="Muzny D.M."/>
            <person name="Mourier T."/>
            <person name="Pain A."/>
            <person name="Lu M."/>
            <person name="Harper D."/>
            <person name="Lindsay R."/>
            <person name="Hauser H."/>
            <person name="James K.D."/>
            <person name="Quiles M."/>
            <person name="Madan Babu M."/>
            <person name="Saito T."/>
            <person name="Buchrieser C."/>
            <person name="Wardroper A."/>
            <person name="Felder M."/>
            <person name="Thangavelu M."/>
            <person name="Johnson D."/>
            <person name="Knights A."/>
            <person name="Loulseged H."/>
            <person name="Mungall K.L."/>
            <person name="Oliver K."/>
            <person name="Price C."/>
            <person name="Quail M.A."/>
            <person name="Urushihara H."/>
            <person name="Hernandez J."/>
            <person name="Rabbinowitsch E."/>
            <person name="Steffen D."/>
            <person name="Sanders M."/>
            <person name="Ma J."/>
            <person name="Kohara Y."/>
            <person name="Sharp S."/>
            <person name="Simmonds M.N."/>
            <person name="Spiegler S."/>
            <person name="Tivey A."/>
            <person name="Sugano S."/>
            <person name="White B."/>
            <person name="Walker D."/>
            <person name="Woodward J.R."/>
            <person name="Winckler T."/>
            <person name="Tanaka Y."/>
            <person name="Shaulsky G."/>
            <person name="Schleicher M."/>
            <person name="Weinstock G.M."/>
            <person name="Rosenthal A."/>
            <person name="Cox E.C."/>
            <person name="Chisholm R.L."/>
            <person name="Gibbs R.A."/>
            <person name="Loomis W.F."/>
            <person name="Platzer M."/>
            <person name="Kay R.R."/>
            <person name="Williams J.G."/>
            <person name="Dear P.H."/>
            <person name="Noegel A.A."/>
            <person name="Barrell B.G."/>
            <person name="Kuspa A."/>
        </authorList>
    </citation>
    <scope>NUCLEOTIDE SEQUENCE [LARGE SCALE GENOMIC DNA]</scope>
    <source>
        <strain>AX4</strain>
    </source>
</reference>
<proteinExistence type="inferred from homology"/>
<organism>
    <name type="scientific">Dictyostelium discoideum</name>
    <name type="common">Social amoeba</name>
    <dbReference type="NCBI Taxonomy" id="44689"/>
    <lineage>
        <taxon>Eukaryota</taxon>
        <taxon>Amoebozoa</taxon>
        <taxon>Evosea</taxon>
        <taxon>Eumycetozoa</taxon>
        <taxon>Dictyostelia</taxon>
        <taxon>Dictyosteliales</taxon>
        <taxon>Dictyosteliaceae</taxon>
        <taxon>Dictyostelium</taxon>
    </lineage>
</organism>
<comment type="subcellular location">
    <subcellularLocation>
        <location evidence="2">Secreted</location>
    </subcellularLocation>
</comment>
<comment type="similarity">
    <text evidence="2">Belongs to the serine-aspartate repeat-containing protein (SDr) family.</text>
</comment>
<keyword id="KW-0325">Glycoprotein</keyword>
<keyword id="KW-1185">Reference proteome</keyword>
<keyword id="KW-0964">Secreted</keyword>
<keyword id="KW-0732">Signal</keyword>
<name>COLD_DICDI</name>
<evidence type="ECO:0000255" key="1"/>
<evidence type="ECO:0000305" key="2"/>
<gene>
    <name type="primary">colD</name>
    <name type="ORF">DDB_G0284983</name>
</gene>
<dbReference type="EMBL" id="AAFI02000073">
    <property type="protein sequence ID" value="EAL64955.1"/>
    <property type="molecule type" value="Genomic_DNA"/>
</dbReference>
<dbReference type="RefSeq" id="XP_639974.1">
    <property type="nucleotide sequence ID" value="XM_634882.1"/>
</dbReference>
<dbReference type="FunCoup" id="Q54NU3">
    <property type="interactions" value="87"/>
</dbReference>
<dbReference type="GlyCosmos" id="Q54NU3">
    <property type="glycosylation" value="11 sites, No reported glycans"/>
</dbReference>
<dbReference type="GlyGen" id="Q54NU3">
    <property type="glycosylation" value="12 sites"/>
</dbReference>
<dbReference type="PaxDb" id="44689-DDB0237872"/>
<dbReference type="EnsemblProtists" id="EAL64955">
    <property type="protein sequence ID" value="EAL64955"/>
    <property type="gene ID" value="DDB_G0284983"/>
</dbReference>
<dbReference type="GeneID" id="8624885"/>
<dbReference type="KEGG" id="ddi:DDB_G0284983"/>
<dbReference type="dictyBase" id="DDB_G0284983">
    <property type="gene designation" value="colD"/>
</dbReference>
<dbReference type="VEuPathDB" id="AmoebaDB:DDB_G0284983"/>
<dbReference type="eggNOG" id="ENOG502RD9P">
    <property type="taxonomic scope" value="Eukaryota"/>
</dbReference>
<dbReference type="HOGENOM" id="CLU_315789_0_0_1"/>
<dbReference type="InParanoid" id="Q54NU3"/>
<dbReference type="OMA" id="NANGQMD"/>
<dbReference type="PRO" id="PR:Q54NU3"/>
<dbReference type="Proteomes" id="UP000002195">
    <property type="component" value="Chromosome 4"/>
</dbReference>
<dbReference type="GO" id="GO:0005576">
    <property type="term" value="C:extracellular region"/>
    <property type="evidence" value="ECO:0007669"/>
    <property type="project" value="UniProtKB-SubCell"/>
</dbReference>
<dbReference type="Gene3D" id="2.60.40.10">
    <property type="entry name" value="Immunoglobulins"/>
    <property type="match status" value="2"/>
</dbReference>
<dbReference type="InterPro" id="IPR013783">
    <property type="entry name" value="Ig-like_fold"/>
</dbReference>
<dbReference type="PANTHER" id="PTHR36108">
    <property type="entry name" value="COLOSSIN-B-RELATED"/>
    <property type="match status" value="1"/>
</dbReference>
<dbReference type="PANTHER" id="PTHR36108:SF13">
    <property type="entry name" value="COLOSSIN-B-RELATED"/>
    <property type="match status" value="1"/>
</dbReference>
<dbReference type="SUPFAM" id="SSF117074">
    <property type="entry name" value="Hypothetical protein PA1324"/>
    <property type="match status" value="2"/>
</dbReference>